<reference key="1">
    <citation type="journal article" date="2008" name="J. Gen. Virol.">
        <title>Comparison of the genome sequences of non-pathogenic and pathogenic African swine fever virus isolates.</title>
        <authorList>
            <person name="Chapman D.A.G."/>
            <person name="Tcherepanov V."/>
            <person name="Upton C."/>
            <person name="Dixon L.K."/>
        </authorList>
    </citation>
    <scope>NUCLEOTIDE SEQUENCE [LARGE SCALE GENOMIC DNA]</scope>
    <source>
        <strain evidence="4">OURT 88/3</strain>
    </source>
</reference>
<reference key="2">
    <citation type="journal article" date="2018" name="Sci. Rep.">
        <title>The intracellular proteome of African swine fever virus.</title>
        <authorList>
            <person name="Kessler C."/>
            <person name="Forth J.H."/>
            <person name="Keil G.M."/>
            <person name="Mettenleiter T.C."/>
            <person name="Blome S."/>
            <person name="Karger A."/>
        </authorList>
    </citation>
    <scope>SIGNAL SEQUENCE CLEAVAGE SITE</scope>
</reference>
<gene>
    <name evidence="4" type="primary">MGF 110-5L</name>
</gene>
<accession>A9JLI7</accession>
<organismHost>
    <name type="scientific">Ornithodoros</name>
    <name type="common">relapsing fever ticks</name>
    <dbReference type="NCBI Taxonomy" id="6937"/>
</organismHost>
<organismHost>
    <name type="scientific">Sus scrofa</name>
    <name type="common">Pig</name>
    <dbReference type="NCBI Taxonomy" id="9823"/>
</organismHost>
<evidence type="ECO:0000250" key="1"/>
<evidence type="ECO:0000269" key="2">
    <source>
    </source>
</evidence>
<evidence type="ECO:0000305" key="3"/>
<evidence type="ECO:0000312" key="4">
    <source>
        <dbReference type="EMBL" id="CAN10359.1"/>
    </source>
</evidence>
<dbReference type="EMBL" id="AM712240">
    <property type="protein sequence ID" value="CAN10359.1"/>
    <property type="molecule type" value="Genomic_DNA"/>
</dbReference>
<dbReference type="RefSeq" id="YP_009703619.1">
    <property type="nucleotide sequence ID" value="NC_044957.1"/>
</dbReference>
<dbReference type="GeneID" id="41902428"/>
<dbReference type="Proteomes" id="UP000108903">
    <property type="component" value="Segment"/>
</dbReference>
<dbReference type="InterPro" id="IPR004848">
    <property type="entry name" value="ASFV_fam_110"/>
</dbReference>
<dbReference type="Pfam" id="PF01639">
    <property type="entry name" value="v110"/>
    <property type="match status" value="1"/>
</dbReference>
<feature type="signal peptide" evidence="2">
    <location>
        <begin position="1"/>
        <end position="28"/>
    </location>
</feature>
<feature type="chain" id="PRO_0000454843" description="Protein MGF 110-5L">
    <location>
        <begin position="29"/>
        <end position="124"/>
    </location>
</feature>
<name>1105L_ASFPP</name>
<sequence>MLVIILGVIGLLANQVLGLPTQAGGHLRSTDNPPQEELGYWCTYMESCKFCWECAHGICKNKVNESMPLIIENSYLTSCEVSRWYNQCTYSEGNGHYHVMDCSDPVPHNRPHRLLMKIYEKEDL</sequence>
<protein>
    <recommendedName>
        <fullName>Protein MGF 110-5L</fullName>
    </recommendedName>
</protein>
<proteinExistence type="evidence at protein level"/>
<comment type="function">
    <text evidence="1">Plays a role in virus cell tropism, and may be required for efficient virus replication in macrophages.</text>
</comment>
<comment type="similarity">
    <text evidence="3">Belongs to the asfivirus MGF 110 family.</text>
</comment>
<organism>
    <name type="scientific">African swine fever virus (isolate Pig/Portugal/OURT88/1988)</name>
    <name type="common">ASFV</name>
    <dbReference type="NCBI Taxonomy" id="443878"/>
    <lineage>
        <taxon>Viruses</taxon>
        <taxon>Varidnaviria</taxon>
        <taxon>Bamfordvirae</taxon>
        <taxon>Nucleocytoviricota</taxon>
        <taxon>Pokkesviricetes</taxon>
        <taxon>Asfuvirales</taxon>
        <taxon>Asfarviridae</taxon>
        <taxon>Asfivirus</taxon>
        <taxon>African swine fever virus</taxon>
    </lineage>
</organism>
<keyword id="KW-0244">Early protein</keyword>
<keyword id="KW-0732">Signal</keyword>